<organismHost>
    <name type="scientific">Escherichia coli</name>
    <dbReference type="NCBI Taxonomy" id="562"/>
</organismHost>
<evidence type="ECO:0000250" key="1"/>
<evidence type="ECO:0000305" key="2"/>
<evidence type="ECO:0007829" key="3">
    <source>
        <dbReference type="PDB" id="1GVP"/>
    </source>
</evidence>
<evidence type="ECO:0007829" key="4">
    <source>
        <dbReference type="PDB" id="1YHB"/>
    </source>
</evidence>
<sequence>MIKVEIKPSQAQFTTRSGVSRQGKPYSLNEQLCYVDLGNEYPVLVKITLDEGQPAYAPGLYTVHLSSFKVGQFGSLMIDRLRLVPAK</sequence>
<keyword id="KW-0002">3D-structure</keyword>
<keyword id="KW-0235">DNA replication</keyword>
<keyword id="KW-0238">DNA-binding</keyword>
<dbReference type="EMBL" id="V00606">
    <property type="protein sequence ID" value="CAA23868.1"/>
    <property type="molecule type" value="Genomic_DNA"/>
</dbReference>
<dbReference type="EMBL" id="J02448">
    <property type="protein sequence ID" value="AAA32211.1"/>
    <property type="molecule type" value="Genomic_DNA"/>
</dbReference>
<dbReference type="EMBL" id="M10677">
    <property type="protein sequence ID" value="AAA32226.1"/>
    <property type="molecule type" value="Genomic_DNA"/>
</dbReference>
<dbReference type="PIR" id="E04271">
    <property type="entry name" value="DDBPF1"/>
</dbReference>
<dbReference type="RefSeq" id="YP_010775826.1">
    <property type="nucleotide sequence ID" value="NC_075025.1"/>
</dbReference>
<dbReference type="RefSeq" id="YP_010775836.1">
    <property type="nucleotide sequence ID" value="NC_075026.1"/>
</dbReference>
<dbReference type="RefSeq" id="YP_010775856.1">
    <property type="nucleotide sequence ID" value="NC_075028.1"/>
</dbReference>
<dbReference type="RefSeq" id="YP_010775866.1">
    <property type="nucleotide sequence ID" value="NC_075029.1"/>
</dbReference>
<dbReference type="RefSeq" id="YP_010775876.1">
    <property type="nucleotide sequence ID" value="NC_075030.1"/>
</dbReference>
<dbReference type="RefSeq" id="YP_010775896.1">
    <property type="nucleotide sequence ID" value="NC_075032.1"/>
</dbReference>
<dbReference type="RefSeq" id="YP_010775906.1">
    <property type="nucleotide sequence ID" value="NC_075033.1"/>
</dbReference>
<dbReference type="PDB" id="1AE2">
    <property type="method" value="X-ray"/>
    <property type="resolution" value="2.00 A"/>
    <property type="chains" value="A=1-87"/>
</dbReference>
<dbReference type="PDB" id="1AE3">
    <property type="method" value="X-ray"/>
    <property type="resolution" value="2.00 A"/>
    <property type="chains" value="A=1-86"/>
</dbReference>
<dbReference type="PDB" id="1GKH">
    <property type="method" value="X-ray"/>
    <property type="resolution" value="1.70 A"/>
    <property type="chains" value="A=1-87"/>
</dbReference>
<dbReference type="PDB" id="1GVP">
    <property type="method" value="X-ray"/>
    <property type="resolution" value="1.60 A"/>
    <property type="chains" value="A=1-87"/>
</dbReference>
<dbReference type="PDB" id="1VQA">
    <property type="method" value="X-ray"/>
    <property type="resolution" value="1.80 A"/>
    <property type="chains" value="A=1-87"/>
</dbReference>
<dbReference type="PDB" id="1VQB">
    <property type="method" value="X-ray"/>
    <property type="resolution" value="1.80 A"/>
    <property type="chains" value="A=1-87"/>
</dbReference>
<dbReference type="PDB" id="1VQC">
    <property type="method" value="X-ray"/>
    <property type="resolution" value="1.80 A"/>
    <property type="chains" value="A=1-87"/>
</dbReference>
<dbReference type="PDB" id="1VQD">
    <property type="method" value="X-ray"/>
    <property type="resolution" value="1.82 A"/>
    <property type="chains" value="A=1-87"/>
</dbReference>
<dbReference type="PDB" id="1VQE">
    <property type="method" value="X-ray"/>
    <property type="resolution" value="1.80 A"/>
    <property type="chains" value="A=1-87"/>
</dbReference>
<dbReference type="PDB" id="1VQF">
    <property type="method" value="X-ray"/>
    <property type="resolution" value="1.80 A"/>
    <property type="chains" value="A=1-87"/>
</dbReference>
<dbReference type="PDB" id="1VQG">
    <property type="method" value="X-ray"/>
    <property type="resolution" value="1.82 A"/>
    <property type="chains" value="A=1-87"/>
</dbReference>
<dbReference type="PDB" id="1VQH">
    <property type="method" value="X-ray"/>
    <property type="resolution" value="1.80 A"/>
    <property type="chains" value="A=1-87"/>
</dbReference>
<dbReference type="PDB" id="1VQI">
    <property type="method" value="X-ray"/>
    <property type="resolution" value="1.80 A"/>
    <property type="chains" value="A=1-87"/>
</dbReference>
<dbReference type="PDB" id="1VQJ">
    <property type="method" value="X-ray"/>
    <property type="resolution" value="1.80 A"/>
    <property type="chains" value="A=1-87"/>
</dbReference>
<dbReference type="PDB" id="1YHA">
    <property type="method" value="X-ray"/>
    <property type="resolution" value="2.50 A"/>
    <property type="chains" value="A/B=1-87"/>
</dbReference>
<dbReference type="PDB" id="1YHB">
    <property type="method" value="X-ray"/>
    <property type="resolution" value="2.20 A"/>
    <property type="chains" value="A=1-87"/>
</dbReference>
<dbReference type="PDBsum" id="1AE2"/>
<dbReference type="PDBsum" id="1AE3"/>
<dbReference type="PDBsum" id="1GKH"/>
<dbReference type="PDBsum" id="1GVP"/>
<dbReference type="PDBsum" id="1VQA"/>
<dbReference type="PDBsum" id="1VQB"/>
<dbReference type="PDBsum" id="1VQC"/>
<dbReference type="PDBsum" id="1VQD"/>
<dbReference type="PDBsum" id="1VQE"/>
<dbReference type="PDBsum" id="1VQF"/>
<dbReference type="PDBsum" id="1VQG"/>
<dbReference type="PDBsum" id="1VQH"/>
<dbReference type="PDBsum" id="1VQI"/>
<dbReference type="PDBsum" id="1VQJ"/>
<dbReference type="PDBsum" id="1YHA"/>
<dbReference type="PDBsum" id="1YHB"/>
<dbReference type="BMRB" id="P69543"/>
<dbReference type="SMR" id="P69543"/>
<dbReference type="GeneID" id="80512435"/>
<dbReference type="GeneID" id="80512446"/>
<dbReference type="GeneID" id="80512461"/>
<dbReference type="GeneID" id="80512472"/>
<dbReference type="GeneID" id="80512483"/>
<dbReference type="GeneID" id="80512505"/>
<dbReference type="GeneID" id="80512516"/>
<dbReference type="EvolutionaryTrace" id="P69543"/>
<dbReference type="Proteomes" id="UP000002557">
    <property type="component" value="Genome"/>
</dbReference>
<dbReference type="Proteomes" id="UP000241027">
    <property type="component" value="Genome"/>
</dbReference>
<dbReference type="GO" id="GO:0003697">
    <property type="term" value="F:single-stranded DNA binding"/>
    <property type="evidence" value="ECO:0007669"/>
    <property type="project" value="InterPro"/>
</dbReference>
<dbReference type="GO" id="GO:0006260">
    <property type="term" value="P:DNA replication"/>
    <property type="evidence" value="ECO:0007669"/>
    <property type="project" value="UniProtKB-KW"/>
</dbReference>
<dbReference type="GO" id="GO:0039684">
    <property type="term" value="P:rolling circle single-stranded viral DNA replication"/>
    <property type="evidence" value="ECO:0000314"/>
    <property type="project" value="UniProtKB"/>
</dbReference>
<dbReference type="FunFam" id="2.40.50.140:FF:000515">
    <property type="entry name" value="DNA-Binding protein G5P"/>
    <property type="match status" value="1"/>
</dbReference>
<dbReference type="Gene3D" id="2.40.50.140">
    <property type="entry name" value="Nucleic acid-binding proteins"/>
    <property type="match status" value="1"/>
</dbReference>
<dbReference type="InterPro" id="IPR012340">
    <property type="entry name" value="NA-bd_OB-fold"/>
</dbReference>
<dbReference type="InterPro" id="IPR003512">
    <property type="entry name" value="Phage_M13_G5P_DNA-bd"/>
</dbReference>
<dbReference type="Pfam" id="PF02303">
    <property type="entry name" value="Phage_DNA_bind"/>
    <property type="match status" value="1"/>
</dbReference>
<dbReference type="SUPFAM" id="SSF50249">
    <property type="entry name" value="Nucleic acid-binding proteins"/>
    <property type="match status" value="1"/>
</dbReference>
<organism>
    <name type="scientific">Enterobacteria phage f1</name>
    <name type="common">Bacteriophage f1</name>
    <dbReference type="NCBI Taxonomy" id="10863"/>
    <lineage>
        <taxon>Viruses</taxon>
        <taxon>Monodnaviria</taxon>
        <taxon>Loebvirae</taxon>
        <taxon>Hofneiviricota</taxon>
        <taxon>Faserviricetes</taxon>
        <taxon>Tubulavirales</taxon>
        <taxon>Inoviridae</taxon>
        <taxon>Inovirus</taxon>
        <taxon>Enterobacteria phage M13</taxon>
    </lineage>
</organism>
<accession>P69543</accession>
<accession>P03669</accession>
<proteinExistence type="evidence at protein level"/>
<reference key="1">
    <citation type="journal article" date="1981" name="Gene">
        <title>Nucleotide sequence and genome organisation of filamentous bacteriophages f1 and fd.</title>
        <authorList>
            <person name="Beck E."/>
            <person name="Zink B."/>
        </authorList>
    </citation>
    <scope>NUCLEOTIDE SEQUENCE [GENOMIC DNA]</scope>
</reference>
<reference key="2">
    <citation type="journal article" date="1980" name="J. Virol.">
        <title>Nucleotide sequences in bacteriophage f1 DNA: nucleotide sequence of genes V, VII, and VIII.</title>
        <authorList>
            <person name="Hill D.F."/>
            <person name="Petersen G.B."/>
        </authorList>
    </citation>
    <scope>NUCLEOTIDE SEQUENCE [GENOMIC DNA]</scope>
</reference>
<reference key="3">
    <citation type="journal article" date="1982" name="J. Virol.">
        <title>Nucleotide sequence of bacteriophage f1 DNA.</title>
        <authorList>
            <person name="Hill D.F."/>
            <person name="Petersen G.B."/>
        </authorList>
    </citation>
    <scope>NUCLEOTIDE SEQUENCE [GENOMIC DNA]</scope>
</reference>
<reference key="4">
    <citation type="journal article" date="1978" name="Proc. Natl. Acad. Sci. U.S.A.">
        <title>Nucleotide sequence of the recognition site for the restriction-modification enzyme of Escherichia coli B.</title>
        <authorList>
            <person name="Ravetch J.V."/>
            <person name="Horiuchi K."/>
            <person name="Zinder N.D."/>
        </authorList>
    </citation>
    <scope>NUCLEOTIDE SEQUENCE [GENOMIC DNA] OF 13-57</scope>
</reference>
<reference key="5">
    <citation type="journal article" date="1994" name="Proc. Natl. Acad. Sci. U.S.A.">
        <title>Structure of the gene V protein of bacteriophage f1 determined by multiwavelength X-ray diffraction on the selenomethionyl protein.</title>
        <authorList>
            <person name="Skinner M.M."/>
            <person name="Zhang H."/>
            <person name="Leschnitzer D.H."/>
            <person name="Guan Y."/>
            <person name="Bellamy H."/>
            <person name="Sweet R.M."/>
            <person name="Gray C.W."/>
            <person name="Konings R.N.H."/>
            <person name="Wang A.H.-J."/>
            <person name="Terwilliger T.C."/>
        </authorList>
    </citation>
    <scope>X-RAY CRYSTALLOGRAPHY (1.8 ANGSTROMS)</scope>
</reference>
<reference key="6">
    <citation type="journal article" date="1994" name="Biochemistry">
        <title>Crystal structures of Y41H and Y41F mutants of gene V protein from Ff phage suggest possible protein-protein interactions in the GVP-ssDNA complex.</title>
        <authorList>
            <person name="Guan Y."/>
            <person name="Zhang H."/>
            <person name="Konings R.N."/>
            <person name="Hilbers C.W."/>
            <person name="Terwilliger T.C."/>
            <person name="Wang A.H."/>
        </authorList>
    </citation>
    <scope>X-RAY CRYSTALLOGRAPHY (2.5 ANGSTROMS) OF MUTANTS HIS-41 AND PHE-41</scope>
</reference>
<reference key="7">
    <citation type="journal article" date="1996" name="J. Mol. Biol.">
        <title>Context dependence of mutational effects in a protein: the crystal structures of the V35I, I47V and V35I/I47V gene V protein core mutants.</title>
        <authorList>
            <person name="Zhang H."/>
            <person name="Skinner M.M."/>
            <person name="Sandberg W.S."/>
            <person name="Wang A.H.-J."/>
            <person name="Terwilliger T.C."/>
        </authorList>
    </citation>
    <scope>X-RAY CRYSTALLOGRAPHY (1.8 ANGSTROMS) OF MUTANTS ILE-35 AND VAL-47</scope>
</reference>
<gene>
    <name type="primary">V</name>
</gene>
<feature type="chain" id="PRO_0000098195" description="DNA-Binding protein G5P">
    <location>
        <begin position="1"/>
        <end position="87"/>
    </location>
</feature>
<feature type="site" description="Involved in DNA binding">
    <location>
        <position position="16"/>
    </location>
</feature>
<feature type="site" description="Involved in DNA binding">
    <location>
        <position position="21"/>
    </location>
</feature>
<feature type="site" description="Involved in DNA binding">
    <location>
        <position position="26"/>
    </location>
</feature>
<feature type="site" description="Involved in DNA binding">
    <location>
        <position position="34"/>
    </location>
</feature>
<feature type="site" description="Involved in DNA binding, and in the dimer-dimer interactions of the protein-ssDNA complex">
    <location>
        <position position="41"/>
    </location>
</feature>
<feature type="site" description="Involved in DNA binding">
    <location>
        <position position="46"/>
    </location>
</feature>
<feature type="strand" evidence="3">
    <location>
        <begin position="4"/>
        <end position="6"/>
    </location>
</feature>
<feature type="helix" evidence="3">
    <location>
        <begin position="8"/>
        <end position="10"/>
    </location>
</feature>
<feature type="strand" evidence="3">
    <location>
        <begin position="14"/>
        <end position="19"/>
    </location>
</feature>
<feature type="strand" evidence="4">
    <location>
        <begin position="21"/>
        <end position="23"/>
    </location>
</feature>
<feature type="strand" evidence="3">
    <location>
        <begin position="25"/>
        <end position="35"/>
    </location>
</feature>
<feature type="strand" evidence="3">
    <location>
        <begin position="38"/>
        <end position="41"/>
    </location>
</feature>
<feature type="strand" evidence="3">
    <location>
        <begin position="43"/>
        <end position="48"/>
    </location>
</feature>
<feature type="strand" evidence="3">
    <location>
        <begin position="58"/>
        <end position="63"/>
    </location>
</feature>
<feature type="helix" evidence="3">
    <location>
        <begin position="65"/>
        <end position="67"/>
    </location>
</feature>
<feature type="strand" evidence="3">
    <location>
        <begin position="68"/>
        <end position="70"/>
    </location>
</feature>
<feature type="strand" evidence="3">
    <location>
        <begin position="74"/>
        <end position="80"/>
    </location>
</feature>
<feature type="strand" evidence="3">
    <location>
        <begin position="83"/>
        <end position="85"/>
    </location>
</feature>
<comment type="function">
    <text evidence="1">Binds to DNA in a highly cooperative manner without pronounced sequence specificity. During synthesis of the single-stranded (progeny) viral DNA, prevents the conversion into the double-stranded replicative form. G5P is displaced by the capsid protein G8P during phage assembly on the inner bacterial membrane (By similarity).</text>
</comment>
<comment type="subunit">
    <text>Homodimer.</text>
</comment>
<comment type="similarity">
    <text evidence="2">Belongs to the inovirus G5P protein family.</text>
</comment>
<name>G5P_BPF1</name>
<protein>
    <recommendedName>
        <fullName>DNA-Binding protein G5P</fullName>
        <shortName>G5P</shortName>
    </recommendedName>
    <alternativeName>
        <fullName>GPV</fullName>
    </alternativeName>
    <alternativeName>
        <fullName>Single-stranded DNA-binding protein</fullName>
    </alternativeName>
</protein>